<organism>
    <name type="scientific">Thermosipho africanus (strain TCF52B)</name>
    <dbReference type="NCBI Taxonomy" id="484019"/>
    <lineage>
        <taxon>Bacteria</taxon>
        <taxon>Thermotogati</taxon>
        <taxon>Thermotogota</taxon>
        <taxon>Thermotogae</taxon>
        <taxon>Thermotogales</taxon>
        <taxon>Fervidobacteriaceae</taxon>
        <taxon>Thermosipho</taxon>
    </lineage>
</organism>
<evidence type="ECO:0000255" key="1">
    <source>
        <dbReference type="HAMAP-Rule" id="MF_00636"/>
    </source>
</evidence>
<evidence type="ECO:0000305" key="2"/>
<proteinExistence type="inferred from homology"/>
<keyword id="KW-0067">ATP-binding</keyword>
<keyword id="KW-0342">GTP-binding</keyword>
<keyword id="KW-0547">Nucleotide-binding</keyword>
<keyword id="KW-1185">Reference proteome</keyword>
<name>Y1518_THEAB</name>
<feature type="chain" id="PRO_0000383300" description="Nucleotide-binding protein THA_1518">
    <location>
        <begin position="1"/>
        <end position="279"/>
    </location>
</feature>
<feature type="binding site" evidence="1">
    <location>
        <begin position="9"/>
        <end position="16"/>
    </location>
    <ligand>
        <name>ATP</name>
        <dbReference type="ChEBI" id="CHEBI:30616"/>
    </ligand>
</feature>
<feature type="binding site" evidence="1">
    <location>
        <begin position="57"/>
        <end position="60"/>
    </location>
    <ligand>
        <name>GTP</name>
        <dbReference type="ChEBI" id="CHEBI:37565"/>
    </ligand>
</feature>
<sequence>MKNLIILTGLSGAGKSTALGLLEDMGFYCIDNLPINLVETILPVISMNVDNIAFVLDARSENFERIDEILNNLKKKYASNLKVIFLTAKDAIIINRFAHTRRNHPLLKRVNSLEKAIQLEREILTKALEFSDIVIDTSNLNPHQLREKLVEILGSVKKKFLVRILSFGFKYGLPLDVDFIFDVRFFPNPFYIKDLREKSGRDEKVKEFLYNTQGVKEYIEMIKNVVDFALKRYENEGRMELSIGIGCTGGQHRSVFFAEELASIYRQRYEVLLEHRDVK</sequence>
<dbReference type="EMBL" id="CP001185">
    <property type="protein sequence ID" value="ACJ75959.1"/>
    <property type="status" value="ALT_INIT"/>
    <property type="molecule type" value="Genomic_DNA"/>
</dbReference>
<dbReference type="SMR" id="B7ID82"/>
<dbReference type="STRING" id="484019.THA_1518"/>
<dbReference type="KEGG" id="taf:THA_1518"/>
<dbReference type="eggNOG" id="COG1660">
    <property type="taxonomic scope" value="Bacteria"/>
</dbReference>
<dbReference type="HOGENOM" id="CLU_059558_0_0_0"/>
<dbReference type="OrthoDB" id="9784461at2"/>
<dbReference type="Proteomes" id="UP000002453">
    <property type="component" value="Chromosome"/>
</dbReference>
<dbReference type="GO" id="GO:0005524">
    <property type="term" value="F:ATP binding"/>
    <property type="evidence" value="ECO:0007669"/>
    <property type="project" value="UniProtKB-UniRule"/>
</dbReference>
<dbReference type="GO" id="GO:0005525">
    <property type="term" value="F:GTP binding"/>
    <property type="evidence" value="ECO:0007669"/>
    <property type="project" value="UniProtKB-UniRule"/>
</dbReference>
<dbReference type="Gene3D" id="3.40.50.300">
    <property type="entry name" value="P-loop containing nucleotide triphosphate hydrolases"/>
    <property type="match status" value="1"/>
</dbReference>
<dbReference type="HAMAP" id="MF_00636">
    <property type="entry name" value="RapZ_like"/>
    <property type="match status" value="1"/>
</dbReference>
<dbReference type="InterPro" id="IPR027417">
    <property type="entry name" value="P-loop_NTPase"/>
</dbReference>
<dbReference type="InterPro" id="IPR005337">
    <property type="entry name" value="RapZ-like"/>
</dbReference>
<dbReference type="InterPro" id="IPR053930">
    <property type="entry name" value="RapZ-like_N"/>
</dbReference>
<dbReference type="InterPro" id="IPR053931">
    <property type="entry name" value="RapZ_C"/>
</dbReference>
<dbReference type="NCBIfam" id="NF003828">
    <property type="entry name" value="PRK05416.1"/>
    <property type="match status" value="1"/>
</dbReference>
<dbReference type="PANTHER" id="PTHR30448">
    <property type="entry name" value="RNASE ADAPTER PROTEIN RAPZ"/>
    <property type="match status" value="1"/>
</dbReference>
<dbReference type="PANTHER" id="PTHR30448:SF0">
    <property type="entry name" value="RNASE ADAPTER PROTEIN RAPZ"/>
    <property type="match status" value="1"/>
</dbReference>
<dbReference type="Pfam" id="PF22740">
    <property type="entry name" value="PapZ_C"/>
    <property type="match status" value="1"/>
</dbReference>
<dbReference type="Pfam" id="PF03668">
    <property type="entry name" value="RapZ-like_N"/>
    <property type="match status" value="1"/>
</dbReference>
<dbReference type="PIRSF" id="PIRSF005052">
    <property type="entry name" value="P-loopkin"/>
    <property type="match status" value="1"/>
</dbReference>
<dbReference type="SUPFAM" id="SSF52540">
    <property type="entry name" value="P-loop containing nucleoside triphosphate hydrolases"/>
    <property type="match status" value="1"/>
</dbReference>
<reference key="1">
    <citation type="journal article" date="2009" name="J. Bacteriol.">
        <title>The genome of Thermosipho africanus TCF52B: lateral genetic connections to the Firmicutes and Archaea.</title>
        <authorList>
            <person name="Nesboe C.L."/>
            <person name="Bapteste E."/>
            <person name="Curtis B."/>
            <person name="Dahle H."/>
            <person name="Lopez P."/>
            <person name="Macleod D."/>
            <person name="Dlutek M."/>
            <person name="Bowman S."/>
            <person name="Zhaxybayeva O."/>
            <person name="Birkeland N.-K."/>
            <person name="Doolittle W.F."/>
        </authorList>
    </citation>
    <scope>NUCLEOTIDE SEQUENCE [LARGE SCALE GENOMIC DNA]</scope>
    <source>
        <strain>TCF52B</strain>
    </source>
</reference>
<comment type="function">
    <text evidence="1">Displays ATPase and GTPase activities.</text>
</comment>
<comment type="similarity">
    <text evidence="1">Belongs to the RapZ-like family.</text>
</comment>
<comment type="sequence caution" evidence="2">
    <conflict type="erroneous initiation">
        <sequence resource="EMBL-CDS" id="ACJ75959"/>
    </conflict>
</comment>
<protein>
    <recommendedName>
        <fullName evidence="1">Nucleotide-binding protein THA_1518</fullName>
    </recommendedName>
</protein>
<gene>
    <name type="ordered locus">THA_1518</name>
</gene>
<accession>B7ID82</accession>